<keyword id="KW-0479">Metal-binding</keyword>
<keyword id="KW-0687">Ribonucleoprotein</keyword>
<keyword id="KW-0689">Ribosomal protein</keyword>
<keyword id="KW-0694">RNA-binding</keyword>
<keyword id="KW-0699">rRNA-binding</keyword>
<keyword id="KW-0862">Zinc</keyword>
<organism>
    <name type="scientific">Hamiltonella defensa subsp. Acyrthosiphon pisum (strain 5AT)</name>
    <dbReference type="NCBI Taxonomy" id="572265"/>
    <lineage>
        <taxon>Bacteria</taxon>
        <taxon>Pseudomonadati</taxon>
        <taxon>Pseudomonadota</taxon>
        <taxon>Gammaproteobacteria</taxon>
        <taxon>Enterobacterales</taxon>
        <taxon>Enterobacteriaceae</taxon>
        <taxon>aphid secondary symbionts</taxon>
        <taxon>Candidatus Hamiltonella</taxon>
    </lineage>
</organism>
<sequence>MKKNIHPDYKLVIASCSCGNVIEVNSTLGCNINLDVCSNCHPAYTNKKREAATGGRVDRFKKRFSFLESSKAE</sequence>
<reference key="1">
    <citation type="journal article" date="2009" name="Proc. Natl. Acad. Sci. U.S.A.">
        <title>Hamiltonella defensa, genome evolution of protective bacterial endosymbiont from pathogenic ancestors.</title>
        <authorList>
            <person name="Degnan P.H."/>
            <person name="Yu Y."/>
            <person name="Sisneros N."/>
            <person name="Wing R.A."/>
            <person name="Moran N.A."/>
        </authorList>
    </citation>
    <scope>NUCLEOTIDE SEQUENCE [LARGE SCALE GENOMIC DNA]</scope>
    <source>
        <strain>5AT</strain>
    </source>
</reference>
<feature type="chain" id="PRO_1000206525" description="Large ribosomal subunit protein bL31">
    <location>
        <begin position="1"/>
        <end position="73"/>
    </location>
</feature>
<feature type="binding site" evidence="1">
    <location>
        <position position="16"/>
    </location>
    <ligand>
        <name>Zn(2+)</name>
        <dbReference type="ChEBI" id="CHEBI:29105"/>
    </ligand>
</feature>
<feature type="binding site" evidence="1">
    <location>
        <position position="18"/>
    </location>
    <ligand>
        <name>Zn(2+)</name>
        <dbReference type="ChEBI" id="CHEBI:29105"/>
    </ligand>
</feature>
<feature type="binding site" evidence="1">
    <location>
        <position position="37"/>
    </location>
    <ligand>
        <name>Zn(2+)</name>
        <dbReference type="ChEBI" id="CHEBI:29105"/>
    </ligand>
</feature>
<feature type="binding site" evidence="1">
    <location>
        <position position="40"/>
    </location>
    <ligand>
        <name>Zn(2+)</name>
        <dbReference type="ChEBI" id="CHEBI:29105"/>
    </ligand>
</feature>
<proteinExistence type="inferred from homology"/>
<dbReference type="EMBL" id="CP001277">
    <property type="protein sequence ID" value="ACQ67140.1"/>
    <property type="molecule type" value="Genomic_DNA"/>
</dbReference>
<dbReference type="RefSeq" id="WP_012738100.1">
    <property type="nucleotide sequence ID" value="NC_012751.1"/>
</dbReference>
<dbReference type="SMR" id="C4K3J7"/>
<dbReference type="STRING" id="572265.HDEF_0384"/>
<dbReference type="GeneID" id="66261929"/>
<dbReference type="KEGG" id="hde:HDEF_0384"/>
<dbReference type="eggNOG" id="COG0254">
    <property type="taxonomic scope" value="Bacteria"/>
</dbReference>
<dbReference type="HOGENOM" id="CLU_114306_4_3_6"/>
<dbReference type="Proteomes" id="UP000002334">
    <property type="component" value="Chromosome"/>
</dbReference>
<dbReference type="GO" id="GO:1990904">
    <property type="term" value="C:ribonucleoprotein complex"/>
    <property type="evidence" value="ECO:0007669"/>
    <property type="project" value="UniProtKB-KW"/>
</dbReference>
<dbReference type="GO" id="GO:0005840">
    <property type="term" value="C:ribosome"/>
    <property type="evidence" value="ECO:0007669"/>
    <property type="project" value="UniProtKB-KW"/>
</dbReference>
<dbReference type="GO" id="GO:0046872">
    <property type="term" value="F:metal ion binding"/>
    <property type="evidence" value="ECO:0007669"/>
    <property type="project" value="UniProtKB-KW"/>
</dbReference>
<dbReference type="GO" id="GO:0019843">
    <property type="term" value="F:rRNA binding"/>
    <property type="evidence" value="ECO:0007669"/>
    <property type="project" value="UniProtKB-KW"/>
</dbReference>
<dbReference type="GO" id="GO:0003735">
    <property type="term" value="F:structural constituent of ribosome"/>
    <property type="evidence" value="ECO:0007669"/>
    <property type="project" value="InterPro"/>
</dbReference>
<dbReference type="GO" id="GO:0006412">
    <property type="term" value="P:translation"/>
    <property type="evidence" value="ECO:0007669"/>
    <property type="project" value="UniProtKB-UniRule"/>
</dbReference>
<dbReference type="Gene3D" id="4.10.830.30">
    <property type="entry name" value="Ribosomal protein L31"/>
    <property type="match status" value="1"/>
</dbReference>
<dbReference type="HAMAP" id="MF_00501">
    <property type="entry name" value="Ribosomal_bL31_1"/>
    <property type="match status" value="1"/>
</dbReference>
<dbReference type="InterPro" id="IPR034704">
    <property type="entry name" value="Ribosomal_bL28/bL31-like_sf"/>
</dbReference>
<dbReference type="InterPro" id="IPR002150">
    <property type="entry name" value="Ribosomal_bL31"/>
</dbReference>
<dbReference type="InterPro" id="IPR027491">
    <property type="entry name" value="Ribosomal_bL31_A"/>
</dbReference>
<dbReference type="InterPro" id="IPR042105">
    <property type="entry name" value="Ribosomal_bL31_sf"/>
</dbReference>
<dbReference type="NCBIfam" id="TIGR00105">
    <property type="entry name" value="L31"/>
    <property type="match status" value="1"/>
</dbReference>
<dbReference type="NCBIfam" id="NF000612">
    <property type="entry name" value="PRK00019.1"/>
    <property type="match status" value="1"/>
</dbReference>
<dbReference type="PANTHER" id="PTHR33280">
    <property type="entry name" value="50S RIBOSOMAL PROTEIN L31, CHLOROPLASTIC"/>
    <property type="match status" value="1"/>
</dbReference>
<dbReference type="PANTHER" id="PTHR33280:SF6">
    <property type="entry name" value="LARGE RIBOSOMAL SUBUNIT PROTEIN BL31A"/>
    <property type="match status" value="1"/>
</dbReference>
<dbReference type="Pfam" id="PF01197">
    <property type="entry name" value="Ribosomal_L31"/>
    <property type="match status" value="1"/>
</dbReference>
<dbReference type="PRINTS" id="PR01249">
    <property type="entry name" value="RIBOSOMALL31"/>
</dbReference>
<dbReference type="SUPFAM" id="SSF143800">
    <property type="entry name" value="L28p-like"/>
    <property type="match status" value="1"/>
</dbReference>
<dbReference type="PROSITE" id="PS01143">
    <property type="entry name" value="RIBOSOMAL_L31"/>
    <property type="match status" value="1"/>
</dbReference>
<gene>
    <name evidence="1" type="primary">rpmE</name>
    <name type="ordered locus">HDEF_0384</name>
</gene>
<comment type="function">
    <text evidence="1">Binds the 23S rRNA.</text>
</comment>
<comment type="cofactor">
    <cofactor evidence="1">
        <name>Zn(2+)</name>
        <dbReference type="ChEBI" id="CHEBI:29105"/>
    </cofactor>
    <text evidence="1">Binds 1 zinc ion per subunit.</text>
</comment>
<comment type="subunit">
    <text evidence="1">Part of the 50S ribosomal subunit.</text>
</comment>
<comment type="similarity">
    <text evidence="1">Belongs to the bacterial ribosomal protein bL31 family. Type A subfamily.</text>
</comment>
<protein>
    <recommendedName>
        <fullName evidence="1">Large ribosomal subunit protein bL31</fullName>
    </recommendedName>
    <alternativeName>
        <fullName evidence="2">50S ribosomal protein L31</fullName>
    </alternativeName>
</protein>
<accession>C4K3J7</accession>
<evidence type="ECO:0000255" key="1">
    <source>
        <dbReference type="HAMAP-Rule" id="MF_00501"/>
    </source>
</evidence>
<evidence type="ECO:0000305" key="2"/>
<name>RL31_HAMD5</name>